<gene>
    <name type="primary">apc2</name>
    <name type="synonym">apcB</name>
    <name type="ordered locus">AZOSEA13240</name>
    <name type="ORF">c1A200</name>
</gene>
<feature type="chain" id="PRO_0000419042" description="Acetophenone carboxylase beta subunit">
    <location>
        <begin position="1"/>
        <end position="129"/>
    </location>
</feature>
<feature type="strand" evidence="3">
    <location>
        <begin position="8"/>
        <end position="14"/>
    </location>
</feature>
<feature type="turn" evidence="3">
    <location>
        <begin position="15"/>
        <end position="18"/>
    </location>
</feature>
<feature type="strand" evidence="3">
    <location>
        <begin position="19"/>
        <end position="22"/>
    </location>
</feature>
<feature type="turn" evidence="3">
    <location>
        <begin position="23"/>
        <end position="25"/>
    </location>
</feature>
<feature type="strand" evidence="3">
    <location>
        <begin position="28"/>
        <end position="31"/>
    </location>
</feature>
<feature type="helix" evidence="3">
    <location>
        <begin position="36"/>
        <end position="39"/>
    </location>
</feature>
<feature type="strand" evidence="3">
    <location>
        <begin position="40"/>
        <end position="45"/>
    </location>
</feature>
<feature type="helix" evidence="3">
    <location>
        <begin position="47"/>
        <end position="49"/>
    </location>
</feature>
<feature type="strand" evidence="3">
    <location>
        <begin position="57"/>
        <end position="59"/>
    </location>
</feature>
<feature type="turn" evidence="3">
    <location>
        <begin position="65"/>
        <end position="67"/>
    </location>
</feature>
<feature type="strand" evidence="3">
    <location>
        <begin position="69"/>
        <end position="74"/>
    </location>
</feature>
<feature type="turn" evidence="3">
    <location>
        <begin position="76"/>
        <end position="78"/>
    </location>
</feature>
<feature type="strand" evidence="3">
    <location>
        <begin position="81"/>
        <end position="87"/>
    </location>
</feature>
<feature type="strand" evidence="3">
    <location>
        <begin position="97"/>
        <end position="99"/>
    </location>
</feature>
<feature type="helix" evidence="3">
    <location>
        <begin position="101"/>
        <end position="110"/>
    </location>
</feature>
<feature type="strand" evidence="3">
    <location>
        <begin position="111"/>
        <end position="116"/>
    </location>
</feature>
<feature type="strand" evidence="3">
    <location>
        <begin position="119"/>
        <end position="121"/>
    </location>
</feature>
<accession>Q5P5G3</accession>
<dbReference type="EC" id="6.4.1.8"/>
<dbReference type="EMBL" id="CR555306">
    <property type="protein sequence ID" value="CAI07449.1"/>
    <property type="molecule type" value="Genomic_DNA"/>
</dbReference>
<dbReference type="RefSeq" id="WP_011237169.1">
    <property type="nucleotide sequence ID" value="NC_006513.1"/>
</dbReference>
<dbReference type="PDB" id="5L9W">
    <property type="method" value="X-ray"/>
    <property type="resolution" value="2.90 A"/>
    <property type="chains" value="C=1-129"/>
</dbReference>
<dbReference type="PDBsum" id="5L9W"/>
<dbReference type="SMR" id="Q5P5G3"/>
<dbReference type="STRING" id="76114.c1A200"/>
<dbReference type="KEGG" id="eba:c1A200"/>
<dbReference type="eggNOG" id="COG4647">
    <property type="taxonomic scope" value="Bacteria"/>
</dbReference>
<dbReference type="HOGENOM" id="CLU_153790_0_0_4"/>
<dbReference type="OrthoDB" id="8688459at2"/>
<dbReference type="BioCyc" id="MetaCyc:MONOMER-14361"/>
<dbReference type="BRENDA" id="6.4.1.8">
    <property type="organism ID" value="12182"/>
</dbReference>
<dbReference type="Proteomes" id="UP000006552">
    <property type="component" value="Chromosome"/>
</dbReference>
<dbReference type="GO" id="GO:0005737">
    <property type="term" value="C:cytoplasm"/>
    <property type="evidence" value="ECO:0007669"/>
    <property type="project" value="UniProtKB-SubCell"/>
</dbReference>
<dbReference type="GO" id="GO:0005524">
    <property type="term" value="F:ATP binding"/>
    <property type="evidence" value="ECO:0007669"/>
    <property type="project" value="UniProtKB-KW"/>
</dbReference>
<dbReference type="GO" id="GO:0016874">
    <property type="term" value="F:ligase activity"/>
    <property type="evidence" value="ECO:0007669"/>
    <property type="project" value="UniProtKB-KW"/>
</dbReference>
<dbReference type="InterPro" id="IPR016750">
    <property type="entry name" value="Aceto_COase_bsu/gsu"/>
</dbReference>
<dbReference type="InterPro" id="IPR050001">
    <property type="entry name" value="ApcB"/>
</dbReference>
<dbReference type="NCBIfam" id="NF042974">
    <property type="entry name" value="AcphenoCarb_ApcB"/>
    <property type="match status" value="1"/>
</dbReference>
<dbReference type="Pfam" id="PF08882">
    <property type="entry name" value="Acetone_carb_G"/>
    <property type="match status" value="1"/>
</dbReference>
<dbReference type="PIRSF" id="PIRSF019217">
    <property type="entry name" value="Acetone_carboxlyase_gsu"/>
    <property type="match status" value="1"/>
</dbReference>
<sequence length="129" mass="14993">MYERIRFTEYLDLDLNDEHWYCHDCGTKLISARESYKKGCLVAERRPHEIHNPVIEGEYSFAPDENWVRILEFYCPGCTRQIETEYLPPGHPITVDIEVDIDSLKARLKKGVIVIKDGKLTKPEAEVLA</sequence>
<evidence type="ECO:0000269" key="1">
    <source>
    </source>
</evidence>
<evidence type="ECO:0000305" key="2"/>
<evidence type="ECO:0007829" key="3">
    <source>
        <dbReference type="PDB" id="5L9W"/>
    </source>
</evidence>
<keyword id="KW-0002">3D-structure</keyword>
<keyword id="KW-0067">ATP-binding</keyword>
<keyword id="KW-0963">Cytoplasm</keyword>
<keyword id="KW-0436">Ligase</keyword>
<keyword id="KW-0547">Nucleotide-binding</keyword>
<keyword id="KW-1185">Reference proteome</keyword>
<name>APCB_AROAE</name>
<proteinExistence type="evidence at protein level"/>
<protein>
    <recommendedName>
        <fullName>Acetophenone carboxylase beta subunit</fullName>
        <ecNumber>6.4.1.8</ecNumber>
    </recommendedName>
    <alternativeName>
        <fullName>Acetophenone carboxylase 15 kDa subunit</fullName>
    </alternativeName>
</protein>
<comment type="function">
    <text evidence="1">Catalyzes the carboxylation of acetophenone to form 3-oxo-3-phenylpropanoate (benzoylacetate) in the anaerobic catabolism of ethylbenzene. Also carboxylates propiophenone at the same rate and 4-acetyl-pyridine at lower rates.</text>
</comment>
<comment type="catalytic activity">
    <reaction evidence="1">
        <text>acetophenone + hydrogencarbonate + 2 ATP + H2O = 3-oxo-3-phenylpropanoate + 2 ADP + 2 phosphate + 2 H(+)</text>
        <dbReference type="Rhea" id="RHEA:28647"/>
        <dbReference type="ChEBI" id="CHEBI:15377"/>
        <dbReference type="ChEBI" id="CHEBI:15378"/>
        <dbReference type="ChEBI" id="CHEBI:17544"/>
        <dbReference type="ChEBI" id="CHEBI:22731"/>
        <dbReference type="ChEBI" id="CHEBI:27632"/>
        <dbReference type="ChEBI" id="CHEBI:30616"/>
        <dbReference type="ChEBI" id="CHEBI:43474"/>
        <dbReference type="ChEBI" id="CHEBI:456216"/>
        <dbReference type="EC" id="6.4.1.8"/>
    </reaction>
</comment>
<comment type="cofactor">
    <cofactor evidence="1">
        <name>Mg(2+)</name>
        <dbReference type="ChEBI" id="CHEBI:18420"/>
    </cofactor>
    <cofactor evidence="1">
        <name>Mn(2+)</name>
        <dbReference type="ChEBI" id="CHEBI:29035"/>
    </cofactor>
    <text evidence="1">Divalent metal cations. Magnesium or manganese are required for activity.</text>
</comment>
<comment type="activity regulation">
    <text evidence="1">Inhibited by zinc ions, carbamoylphosphate and beta,gamma-imido-ATP.</text>
</comment>
<comment type="biophysicochemical properties">
    <kinetics>
        <KM evidence="1">33 uM for acetophone</KM>
        <KM evidence="1">0.54 mM for HCO(3)(-)</KM>
        <KM evidence="1">0.5 mM for ATP</KM>
        <Vmax evidence="1">51.0 mmol/min/mg enzyme</Vmax>
        <text>Kinetic parameters have been established using the heteromeric complex including recombinant Apc5.</text>
    </kinetics>
</comment>
<comment type="subunit">
    <text evidence="1">Acetophenone carboxylase consists of five subunits; a heterooctameric subcomplex of two alpha (Apc1), two beta (Apc2), two gamma (Apc3) and two delta (Apc4) subunits assembles with the epsilon (Apc5) subunit in an unknown stoichiometry.</text>
</comment>
<comment type="subcellular location">
    <subcellularLocation>
        <location evidence="2">Cytoplasm</location>
    </subcellularLocation>
</comment>
<organism>
    <name type="scientific">Aromatoleum aromaticum (strain DSM 19018 / LMG 30748 / EbN1)</name>
    <name type="common">Azoarcus sp. (strain EbN1)</name>
    <dbReference type="NCBI Taxonomy" id="76114"/>
    <lineage>
        <taxon>Bacteria</taxon>
        <taxon>Pseudomonadati</taxon>
        <taxon>Pseudomonadota</taxon>
        <taxon>Betaproteobacteria</taxon>
        <taxon>Rhodocyclales</taxon>
        <taxon>Rhodocyclaceae</taxon>
        <taxon>Aromatoleum</taxon>
    </lineage>
</organism>
<reference key="1">
    <citation type="journal article" date="2005" name="Arch. Microbiol.">
        <title>The genome sequence of an anaerobic aromatic-degrading denitrifying bacterium, strain EbN1.</title>
        <authorList>
            <person name="Rabus R."/>
            <person name="Kube M."/>
            <person name="Heider J."/>
            <person name="Beck A."/>
            <person name="Heitmann K."/>
            <person name="Widdel F."/>
            <person name="Reinhardt R."/>
        </authorList>
    </citation>
    <scope>NUCLEOTIDE SEQUENCE [LARGE SCALE GENOMIC DNA]</scope>
    <source>
        <strain>DSM 19018 / LMG 30748 / EbN1</strain>
    </source>
</reference>
<reference key="2">
    <citation type="journal article" date="2002" name="Arch. Microbiol.">
        <title>Genes involved in the anaerobic degradation of ethylbenzene in a denitrifying bacterium, strain EbN1.</title>
        <authorList>
            <person name="Rabus R."/>
            <person name="Kube M."/>
            <person name="Beck A."/>
            <person name="Widdel F."/>
            <person name="Reinhardt R."/>
        </authorList>
    </citation>
    <scope>IDENTIFICATION</scope>
</reference>
<reference key="3">
    <citation type="journal article" date="2010" name="J. Bacteriol.">
        <title>ATP-dependent carboxylation of acetophenone by a novel type of carboxylase.</title>
        <authorList>
            <person name="Jobst B."/>
            <person name="Schuhle K."/>
            <person name="Linne U."/>
            <person name="Heider J."/>
        </authorList>
    </citation>
    <scope>FUNCTION</scope>
    <scope>CATALYTIC ACTIVITY</scope>
    <scope>ACTIVITY REGULATION</scope>
    <scope>BIOPHYSICOCHEMICAL PROPERTIES</scope>
    <scope>COFACTOR</scope>
    <scope>SUBUNIT</scope>
</reference>